<keyword id="KW-0963">Cytoplasm</keyword>
<keyword id="KW-0206">Cytoskeleton</keyword>
<keyword id="KW-1017">Isopeptide bond</keyword>
<keyword id="KW-0507">mRNA processing</keyword>
<keyword id="KW-0508">mRNA splicing</keyword>
<keyword id="KW-0539">Nucleus</keyword>
<keyword id="KW-0597">Phosphoprotein</keyword>
<keyword id="KW-1185">Reference proteome</keyword>
<keyword id="KW-0678">Repressor</keyword>
<keyword id="KW-0804">Transcription</keyword>
<keyword id="KW-0805">Transcription regulation</keyword>
<keyword id="KW-0832">Ubl conjugation</keyword>
<dbReference type="EMBL" id="BC085869">
    <property type="protein sequence ID" value="AAH85869.1"/>
    <property type="molecule type" value="mRNA"/>
</dbReference>
<dbReference type="RefSeq" id="NP_001007800.1">
    <property type="nucleotide sequence ID" value="NM_001007799.2"/>
</dbReference>
<dbReference type="SMR" id="Q5U2T8"/>
<dbReference type="FunCoup" id="Q5U2T8">
    <property type="interactions" value="2505"/>
</dbReference>
<dbReference type="STRING" id="10116.ENSRNOP00000060978"/>
<dbReference type="iPTMnet" id="Q5U2T8"/>
<dbReference type="PhosphoSitePlus" id="Q5U2T8"/>
<dbReference type="PaxDb" id="10116-ENSRNOP00000060978"/>
<dbReference type="Ensembl" id="ENSRNOT00000064662.2">
    <property type="protein sequence ID" value="ENSRNOP00000060978.1"/>
    <property type="gene ID" value="ENSRNOG00000018719.7"/>
</dbReference>
<dbReference type="GeneID" id="362149"/>
<dbReference type="KEGG" id="rno:362149"/>
<dbReference type="AGR" id="RGD:1309199"/>
<dbReference type="CTD" id="9541"/>
<dbReference type="RGD" id="1309199">
    <property type="gene designation" value="Cir1"/>
</dbReference>
<dbReference type="eggNOG" id="KOG3794">
    <property type="taxonomic scope" value="Eukaryota"/>
</dbReference>
<dbReference type="GeneTree" id="ENSGT00730000111135"/>
<dbReference type="HOGENOM" id="CLU_035642_2_0_1"/>
<dbReference type="InParanoid" id="Q5U2T8"/>
<dbReference type="OMA" id="CSMYSIS"/>
<dbReference type="OrthoDB" id="89141at9989"/>
<dbReference type="PRO" id="PR:Q5U2T8"/>
<dbReference type="Proteomes" id="UP000002494">
    <property type="component" value="Chromosome 3"/>
</dbReference>
<dbReference type="Bgee" id="ENSRNOG00000018719">
    <property type="expression patterns" value="Expressed in thymus and 20 other cell types or tissues"/>
</dbReference>
<dbReference type="GO" id="GO:0005813">
    <property type="term" value="C:centrosome"/>
    <property type="evidence" value="ECO:0000266"/>
    <property type="project" value="RGD"/>
</dbReference>
<dbReference type="GO" id="GO:0005737">
    <property type="term" value="C:cytoplasm"/>
    <property type="evidence" value="ECO:0007669"/>
    <property type="project" value="UniProtKB-KW"/>
</dbReference>
<dbReference type="GO" id="GO:0016607">
    <property type="term" value="C:nuclear speck"/>
    <property type="evidence" value="ECO:0000266"/>
    <property type="project" value="RGD"/>
</dbReference>
<dbReference type="GO" id="GO:0005634">
    <property type="term" value="C:nucleus"/>
    <property type="evidence" value="ECO:0000266"/>
    <property type="project" value="RGD"/>
</dbReference>
<dbReference type="GO" id="GO:0032991">
    <property type="term" value="C:protein-containing complex"/>
    <property type="evidence" value="ECO:0000266"/>
    <property type="project" value="RGD"/>
</dbReference>
<dbReference type="GO" id="GO:0042826">
    <property type="term" value="F:histone deacetylase binding"/>
    <property type="evidence" value="ECO:0000266"/>
    <property type="project" value="RGD"/>
</dbReference>
<dbReference type="GO" id="GO:0019901">
    <property type="term" value="F:protein kinase binding"/>
    <property type="evidence" value="ECO:0000266"/>
    <property type="project" value="RGD"/>
</dbReference>
<dbReference type="GO" id="GO:0044877">
    <property type="term" value="F:protein-containing complex binding"/>
    <property type="evidence" value="ECO:0000266"/>
    <property type="project" value="RGD"/>
</dbReference>
<dbReference type="GO" id="GO:0003714">
    <property type="term" value="F:transcription corepressor activity"/>
    <property type="evidence" value="ECO:0000266"/>
    <property type="project" value="RGD"/>
</dbReference>
<dbReference type="GO" id="GO:0001701">
    <property type="term" value="P:in utero embryonic development"/>
    <property type="evidence" value="ECO:0000266"/>
    <property type="project" value="RGD"/>
</dbReference>
<dbReference type="GO" id="GO:0006397">
    <property type="term" value="P:mRNA processing"/>
    <property type="evidence" value="ECO:0007669"/>
    <property type="project" value="UniProtKB-KW"/>
</dbReference>
<dbReference type="GO" id="GO:0045892">
    <property type="term" value="P:negative regulation of DNA-templated transcription"/>
    <property type="evidence" value="ECO:0000266"/>
    <property type="project" value="RGD"/>
</dbReference>
<dbReference type="GO" id="GO:0000122">
    <property type="term" value="P:negative regulation of transcription by RNA polymerase II"/>
    <property type="evidence" value="ECO:0000266"/>
    <property type="project" value="RGD"/>
</dbReference>
<dbReference type="GO" id="GO:0008380">
    <property type="term" value="P:RNA splicing"/>
    <property type="evidence" value="ECO:0007669"/>
    <property type="project" value="UniProtKB-KW"/>
</dbReference>
<dbReference type="InterPro" id="IPR040014">
    <property type="entry name" value="CIR1"/>
</dbReference>
<dbReference type="InterPro" id="IPR019339">
    <property type="entry name" value="CIR_N_dom"/>
</dbReference>
<dbReference type="PANTHER" id="PTHR13151">
    <property type="entry name" value="CBF1 INTERACTING COREPRESSOR CIR"/>
    <property type="match status" value="1"/>
</dbReference>
<dbReference type="PANTHER" id="PTHR13151:SF2">
    <property type="entry name" value="COREPRESSOR INTERACTING WITH RBPJ 1"/>
    <property type="match status" value="1"/>
</dbReference>
<dbReference type="Pfam" id="PF10197">
    <property type="entry name" value="Cir_N"/>
    <property type="match status" value="1"/>
</dbReference>
<dbReference type="SMART" id="SM01083">
    <property type="entry name" value="Cir_N"/>
    <property type="match status" value="1"/>
</dbReference>
<gene>
    <name type="primary">Cir1</name>
    <name type="synonym">Cir</name>
</gene>
<organism>
    <name type="scientific">Rattus norvegicus</name>
    <name type="common">Rat</name>
    <dbReference type="NCBI Taxonomy" id="10116"/>
    <lineage>
        <taxon>Eukaryota</taxon>
        <taxon>Metazoa</taxon>
        <taxon>Chordata</taxon>
        <taxon>Craniata</taxon>
        <taxon>Vertebrata</taxon>
        <taxon>Euteleostomi</taxon>
        <taxon>Mammalia</taxon>
        <taxon>Eutheria</taxon>
        <taxon>Euarchontoglires</taxon>
        <taxon>Glires</taxon>
        <taxon>Rodentia</taxon>
        <taxon>Myomorpha</taxon>
        <taxon>Muroidea</taxon>
        <taxon>Muridae</taxon>
        <taxon>Murinae</taxon>
        <taxon>Rattus</taxon>
    </lineage>
</organism>
<reference key="1">
    <citation type="journal article" date="2004" name="Genome Res.">
        <title>The status, quality, and expansion of the NIH full-length cDNA project: the Mammalian Gene Collection (MGC).</title>
        <authorList>
            <consortium name="The MGC Project Team"/>
        </authorList>
    </citation>
    <scope>NUCLEOTIDE SEQUENCE [LARGE SCALE MRNA]</scope>
    <source>
        <tissue>Heart</tissue>
    </source>
</reference>
<reference key="2">
    <citation type="journal article" date="2012" name="Nat. Commun.">
        <title>Quantitative maps of protein phosphorylation sites across 14 different rat organs and tissues.</title>
        <authorList>
            <person name="Lundby A."/>
            <person name="Secher A."/>
            <person name="Lage K."/>
            <person name="Nordsborg N.B."/>
            <person name="Dmytriyev A."/>
            <person name="Lundby C."/>
            <person name="Olsen J.V."/>
        </authorList>
    </citation>
    <scope>PHOSPHORYLATION [LARGE SCALE ANALYSIS] AT SER-202</scope>
    <scope>IDENTIFICATION BY MASS SPECTROMETRY [LARGE SCALE ANALYSIS]</scope>
</reference>
<comment type="function">
    <text evidence="1">May modulate splice site selection during alternative splicing of pre-mRNAs. Regulates transcription and acts as a corepressor for RBPJ. Recruits RBPJ to the Sin3-histone deacetylase complex (HDAC). Required for RBPJ-mediated repression of transcription (By similarity).</text>
</comment>
<comment type="subunit">
    <text evidence="2 3">Interacts with RP9, SNW1, SFRS1, SFRS2,U2AF1, RBPJ, SAP30, HDAC2 NKAP and NEK6. Interacts with Epstein-Barr virus RPMS1. Component of the histone deacetylase complex. Component of the Notch corepressor complex. Interacts with NKAPL.</text>
</comment>
<comment type="subcellular location">
    <subcellularLocation>
        <location evidence="1">Nucleus speckle</location>
    </subcellularLocation>
    <subcellularLocation>
        <location evidence="1">Cytoplasm</location>
        <location evidence="1">Cytoskeleton</location>
        <location evidence="1">Microtubule organizing center</location>
        <location evidence="1">Centrosome</location>
    </subcellularLocation>
    <text evidence="1">Colocalizes with NEK6 in the centrosome.</text>
</comment>
<comment type="PTM">
    <text evidence="1">Phosphorylated by NEK6.</text>
</comment>
<evidence type="ECO:0000250" key="1"/>
<evidence type="ECO:0000250" key="2">
    <source>
        <dbReference type="UniProtKB" id="Q86X95"/>
    </source>
</evidence>
<evidence type="ECO:0000250" key="3">
    <source>
        <dbReference type="UniProtKB" id="Q9DA19"/>
    </source>
</evidence>
<evidence type="ECO:0000255" key="4"/>
<evidence type="ECO:0000256" key="5">
    <source>
        <dbReference type="SAM" id="MobiDB-lite"/>
    </source>
</evidence>
<evidence type="ECO:0007744" key="6">
    <source>
    </source>
</evidence>
<feature type="chain" id="PRO_0000247986" description="Corepressor interacting with RBPJ 1">
    <location>
        <begin position="1"/>
        <end position="451"/>
    </location>
</feature>
<feature type="region of interest" description="Interaction with RBPJ" evidence="1">
    <location>
        <begin position="1"/>
        <end position="121"/>
    </location>
</feature>
<feature type="region of interest" description="Interaction with RP9" evidence="1">
    <location>
        <begin position="204"/>
        <end position="232"/>
    </location>
</feature>
<feature type="region of interest" description="Disordered" evidence="5">
    <location>
        <begin position="213"/>
        <end position="451"/>
    </location>
</feature>
<feature type="short sequence motif" description="Nuclear localization signal" evidence="4">
    <location>
        <begin position="233"/>
        <end position="247"/>
    </location>
</feature>
<feature type="short sequence motif" description="Nuclear localization signal" evidence="4">
    <location>
        <begin position="307"/>
        <end position="315"/>
    </location>
</feature>
<feature type="compositionally biased region" description="Basic residues" evidence="5">
    <location>
        <begin position="233"/>
        <end position="260"/>
    </location>
</feature>
<feature type="compositionally biased region" description="Low complexity" evidence="5">
    <location>
        <begin position="261"/>
        <end position="296"/>
    </location>
</feature>
<feature type="compositionally biased region" description="Basic residues" evidence="5">
    <location>
        <begin position="305"/>
        <end position="315"/>
    </location>
</feature>
<feature type="compositionally biased region" description="Basic and acidic residues" evidence="5">
    <location>
        <begin position="341"/>
        <end position="355"/>
    </location>
</feature>
<feature type="compositionally biased region" description="Polar residues" evidence="5">
    <location>
        <begin position="356"/>
        <end position="367"/>
    </location>
</feature>
<feature type="compositionally biased region" description="Basic and acidic residues" evidence="5">
    <location>
        <begin position="369"/>
        <end position="387"/>
    </location>
</feature>
<feature type="compositionally biased region" description="Basic and acidic residues" evidence="5">
    <location>
        <begin position="413"/>
        <end position="451"/>
    </location>
</feature>
<feature type="modified residue" description="Phosphoserine" evidence="6">
    <location>
        <position position="202"/>
    </location>
</feature>
<feature type="cross-link" description="Glycyl lysine isopeptide (Lys-Gly) (interchain with G-Cter in SUMO2)" evidence="2">
    <location>
        <position position="79"/>
    </location>
</feature>
<feature type="cross-link" description="Glycyl lysine isopeptide (Lys-Gly) (interchain with G-Cter in SUMO2)" evidence="2">
    <location>
        <position position="355"/>
    </location>
</feature>
<name>CIR1_RAT</name>
<sequence length="451" mass="51416">MGKSFANFMCKKDFHPASKSNIKKVWMAEQKISYDKKKQEELMQQYLKEQESYDNRLLMGDERVKNGLNFMYEAPPGVKKENKEKEETEGETEYKFEWQKGAPREKYAKDDMNIRDQPFGIQVRNVRCIKCHKWGHVNTDRECPLFGLSGINASSVPTDGSGPSMHPSELIAEMRNSGFALKRNVLGRNLTANDPSQDYVASDGEEDPEVEFLKSLTTKQKQKLLRKLDRLEKKKKKKKSDKKKKKLQKSKNKHKKHKKSSSSSSSSSSSSSSSSSSSSSSSSSSTSSSETDSSSESDNKEKKEKEKRKKRKKTKCSGNKSGDCKEYKSKNMLYEELSSSHSDRGKAQEKLRLLKQESSGENSTWVHSGSDRKSRSHQHSPERKGSDRNGGSRSRSRAEGSRRSRSRSPCGQKHREREARSRPHQSPSEEQKGRKGTRSHGDSEHRRERAR</sequence>
<protein>
    <recommendedName>
        <fullName>Corepressor interacting with RBPJ 1</fullName>
    </recommendedName>
    <alternativeName>
        <fullName>CBF1-interacting corepressor</fullName>
    </alternativeName>
</protein>
<proteinExistence type="evidence at protein level"/>
<accession>Q5U2T8</accession>